<gene>
    <name evidence="1" type="primary">rplO</name>
    <name type="ordered locus">PSPA7_0856</name>
</gene>
<reference key="1">
    <citation type="submission" date="2007-06" db="EMBL/GenBank/DDBJ databases">
        <authorList>
            <person name="Dodson R.J."/>
            <person name="Harkins D."/>
            <person name="Paulsen I.T."/>
        </authorList>
    </citation>
    <scope>NUCLEOTIDE SEQUENCE [LARGE SCALE GENOMIC DNA]</scope>
    <source>
        <strain>DSM 24068 / PA7</strain>
    </source>
</reference>
<comment type="function">
    <text evidence="1">Binds to the 23S rRNA.</text>
</comment>
<comment type="subunit">
    <text evidence="1">Part of the 50S ribosomal subunit.</text>
</comment>
<comment type="similarity">
    <text evidence="1">Belongs to the universal ribosomal protein uL15 family.</text>
</comment>
<evidence type="ECO:0000255" key="1">
    <source>
        <dbReference type="HAMAP-Rule" id="MF_01341"/>
    </source>
</evidence>
<evidence type="ECO:0000256" key="2">
    <source>
        <dbReference type="SAM" id="MobiDB-lite"/>
    </source>
</evidence>
<evidence type="ECO:0000305" key="3"/>
<dbReference type="EMBL" id="CP000744">
    <property type="protein sequence ID" value="ABR82278.1"/>
    <property type="molecule type" value="Genomic_DNA"/>
</dbReference>
<dbReference type="RefSeq" id="WP_003093695.1">
    <property type="nucleotide sequence ID" value="NC_009656.1"/>
</dbReference>
<dbReference type="SMR" id="A6UZK7"/>
<dbReference type="GeneID" id="77219217"/>
<dbReference type="KEGG" id="pap:PSPA7_0856"/>
<dbReference type="HOGENOM" id="CLU_055188_4_2_6"/>
<dbReference type="Proteomes" id="UP000001582">
    <property type="component" value="Chromosome"/>
</dbReference>
<dbReference type="GO" id="GO:0022625">
    <property type="term" value="C:cytosolic large ribosomal subunit"/>
    <property type="evidence" value="ECO:0007669"/>
    <property type="project" value="TreeGrafter"/>
</dbReference>
<dbReference type="GO" id="GO:0019843">
    <property type="term" value="F:rRNA binding"/>
    <property type="evidence" value="ECO:0007669"/>
    <property type="project" value="UniProtKB-UniRule"/>
</dbReference>
<dbReference type="GO" id="GO:0003735">
    <property type="term" value="F:structural constituent of ribosome"/>
    <property type="evidence" value="ECO:0007669"/>
    <property type="project" value="InterPro"/>
</dbReference>
<dbReference type="GO" id="GO:0006412">
    <property type="term" value="P:translation"/>
    <property type="evidence" value="ECO:0007669"/>
    <property type="project" value="UniProtKB-UniRule"/>
</dbReference>
<dbReference type="FunFam" id="3.100.10.10:FF:000003">
    <property type="entry name" value="50S ribosomal protein L15"/>
    <property type="match status" value="1"/>
</dbReference>
<dbReference type="Gene3D" id="3.100.10.10">
    <property type="match status" value="1"/>
</dbReference>
<dbReference type="HAMAP" id="MF_01341">
    <property type="entry name" value="Ribosomal_uL15"/>
    <property type="match status" value="1"/>
</dbReference>
<dbReference type="InterPro" id="IPR030878">
    <property type="entry name" value="Ribosomal_uL15"/>
</dbReference>
<dbReference type="InterPro" id="IPR021131">
    <property type="entry name" value="Ribosomal_uL15/eL18"/>
</dbReference>
<dbReference type="InterPro" id="IPR036227">
    <property type="entry name" value="Ribosomal_uL15/eL18_sf"/>
</dbReference>
<dbReference type="InterPro" id="IPR005749">
    <property type="entry name" value="Ribosomal_uL15_bac-type"/>
</dbReference>
<dbReference type="InterPro" id="IPR001196">
    <property type="entry name" value="Ribosomal_uL15_CS"/>
</dbReference>
<dbReference type="NCBIfam" id="TIGR01071">
    <property type="entry name" value="rplO_bact"/>
    <property type="match status" value="1"/>
</dbReference>
<dbReference type="PANTHER" id="PTHR12934">
    <property type="entry name" value="50S RIBOSOMAL PROTEIN L15"/>
    <property type="match status" value="1"/>
</dbReference>
<dbReference type="PANTHER" id="PTHR12934:SF11">
    <property type="entry name" value="LARGE RIBOSOMAL SUBUNIT PROTEIN UL15M"/>
    <property type="match status" value="1"/>
</dbReference>
<dbReference type="Pfam" id="PF00828">
    <property type="entry name" value="Ribosomal_L27A"/>
    <property type="match status" value="1"/>
</dbReference>
<dbReference type="SUPFAM" id="SSF52080">
    <property type="entry name" value="Ribosomal proteins L15p and L18e"/>
    <property type="match status" value="1"/>
</dbReference>
<dbReference type="PROSITE" id="PS00475">
    <property type="entry name" value="RIBOSOMAL_L15"/>
    <property type="match status" value="1"/>
</dbReference>
<sequence>MQLNDLRSAPGARREKHRPGRGIGSGLGKTGGRGHKGLTSRSGGKVAPGFEGGQQPLHRRLPKFGFVSLKAMDRAEVRTSELAKVEGDVVSLQTLKDANLINQHVQRVKVMLSGEVGRAVTLKGIAATKGARAAIEAAGGKFED</sequence>
<keyword id="KW-0687">Ribonucleoprotein</keyword>
<keyword id="KW-0689">Ribosomal protein</keyword>
<keyword id="KW-0694">RNA-binding</keyword>
<keyword id="KW-0699">rRNA-binding</keyword>
<organism>
    <name type="scientific">Pseudomonas paraeruginosa (strain DSM 24068 / PA7)</name>
    <name type="common">Pseudomonas aeruginosa (strain PA7)</name>
    <dbReference type="NCBI Taxonomy" id="381754"/>
    <lineage>
        <taxon>Bacteria</taxon>
        <taxon>Pseudomonadati</taxon>
        <taxon>Pseudomonadota</taxon>
        <taxon>Gammaproteobacteria</taxon>
        <taxon>Pseudomonadales</taxon>
        <taxon>Pseudomonadaceae</taxon>
        <taxon>Pseudomonas</taxon>
        <taxon>Pseudomonas paraeruginosa</taxon>
    </lineage>
</organism>
<feature type="chain" id="PRO_1000054517" description="Large ribosomal subunit protein uL15">
    <location>
        <begin position="1"/>
        <end position="144"/>
    </location>
</feature>
<feature type="region of interest" description="Disordered" evidence="2">
    <location>
        <begin position="1"/>
        <end position="57"/>
    </location>
</feature>
<feature type="compositionally biased region" description="Gly residues" evidence="2">
    <location>
        <begin position="21"/>
        <end position="31"/>
    </location>
</feature>
<name>RL15_PSEP7</name>
<proteinExistence type="inferred from homology"/>
<accession>A6UZK7</accession>
<protein>
    <recommendedName>
        <fullName evidence="1">Large ribosomal subunit protein uL15</fullName>
    </recommendedName>
    <alternativeName>
        <fullName evidence="3">50S ribosomal protein L15</fullName>
    </alternativeName>
</protein>